<sequence length="432" mass="46185">MSTANPASAPDSFFSASLEQADPEIAAAIRGELGRQRHEVELIASENIVSRAVLEAQGSVMTNKYAEGYPGNRYYGGCEFVDVAENLAIDRAKKLFGANFANVQPNSGSQMNQAVFLALLQPGDTFMGLDLAAGGHLTHGAPVNMSGKWFKPVHYTVRREDQMIDMDAVAKLAEEAKPKLIIAGGSAYPRAWDFKRFREIADSVGAYFMVDMAHFAGLVAGGVHASPVPHAHVTTTTTHKSLRGPRGGLILTNDEALAKKFNSAIFPGLQGGPLMHVIAAKAVAFKEALQPDFKVYTKNVVENAKALAETLRSAGFDLVSGGTDNHLMLVDLRPKGLKGNVSEKALVRAGITCNKNGIPFDPEKPFVTSGLRLGTPAATTRGFGVAEFQQVGHLIAEVLNAIAQSSDGAAPLVEASVKQRVKELTDRFPIYQ</sequence>
<name>GLYA1_RHOPA</name>
<feature type="chain" id="PRO_0000113651" description="Serine hydroxymethyltransferase 1">
    <location>
        <begin position="1"/>
        <end position="432"/>
    </location>
</feature>
<feature type="binding site" evidence="1">
    <location>
        <position position="131"/>
    </location>
    <ligand>
        <name>(6S)-5,6,7,8-tetrahydrofolate</name>
        <dbReference type="ChEBI" id="CHEBI:57453"/>
    </ligand>
</feature>
<feature type="binding site" evidence="1">
    <location>
        <begin position="135"/>
        <end position="137"/>
    </location>
    <ligand>
        <name>(6S)-5,6,7,8-tetrahydrofolate</name>
        <dbReference type="ChEBI" id="CHEBI:57453"/>
    </ligand>
</feature>
<feature type="site" description="Plays an important role in substrate specificity" evidence="1">
    <location>
        <position position="239"/>
    </location>
</feature>
<feature type="modified residue" description="N6-(pyridoxal phosphate)lysine" evidence="1">
    <location>
        <position position="240"/>
    </location>
</feature>
<protein>
    <recommendedName>
        <fullName evidence="1">Serine hydroxymethyltransferase 1</fullName>
        <shortName evidence="1">SHMT 1</shortName>
        <shortName evidence="1">Serine methylase 1</shortName>
        <ecNumber evidence="1">2.1.2.1</ecNumber>
    </recommendedName>
</protein>
<reference key="1">
    <citation type="journal article" date="2004" name="Nat. Biotechnol.">
        <title>Complete genome sequence of the metabolically versatile photosynthetic bacterium Rhodopseudomonas palustris.</title>
        <authorList>
            <person name="Larimer F.W."/>
            <person name="Chain P."/>
            <person name="Hauser L."/>
            <person name="Lamerdin J.E."/>
            <person name="Malfatti S."/>
            <person name="Do L."/>
            <person name="Land M.L."/>
            <person name="Pelletier D.A."/>
            <person name="Beatty J.T."/>
            <person name="Lang A.S."/>
            <person name="Tabita F.R."/>
            <person name="Gibson J.L."/>
            <person name="Hanson T.E."/>
            <person name="Bobst C."/>
            <person name="Torres y Torres J.L."/>
            <person name="Peres C."/>
            <person name="Harrison F.H."/>
            <person name="Gibson J."/>
            <person name="Harwood C.S."/>
        </authorList>
    </citation>
    <scope>NUCLEOTIDE SEQUENCE [LARGE SCALE GENOMIC DNA]</scope>
    <source>
        <strain>ATCC BAA-98 / CGA009</strain>
    </source>
</reference>
<organism>
    <name type="scientific">Rhodopseudomonas palustris (strain ATCC BAA-98 / CGA009)</name>
    <dbReference type="NCBI Taxonomy" id="258594"/>
    <lineage>
        <taxon>Bacteria</taxon>
        <taxon>Pseudomonadati</taxon>
        <taxon>Pseudomonadota</taxon>
        <taxon>Alphaproteobacteria</taxon>
        <taxon>Hyphomicrobiales</taxon>
        <taxon>Nitrobacteraceae</taxon>
        <taxon>Rhodopseudomonas</taxon>
    </lineage>
</organism>
<accession>Q6N693</accession>
<proteinExistence type="inferred from homology"/>
<dbReference type="EC" id="2.1.2.1" evidence="1"/>
<dbReference type="EMBL" id="BX572601">
    <property type="protein sequence ID" value="CAE28166.1"/>
    <property type="molecule type" value="Genomic_DNA"/>
</dbReference>
<dbReference type="RefSeq" id="WP_011158275.1">
    <property type="nucleotide sequence ID" value="NZ_CP116810.1"/>
</dbReference>
<dbReference type="SMR" id="Q6N693"/>
<dbReference type="STRING" id="258594.RPA2724"/>
<dbReference type="GeneID" id="66893800"/>
<dbReference type="eggNOG" id="COG0112">
    <property type="taxonomic scope" value="Bacteria"/>
</dbReference>
<dbReference type="HOGENOM" id="CLU_022477_2_1_5"/>
<dbReference type="PhylomeDB" id="Q6N693"/>
<dbReference type="UniPathway" id="UPA00193"/>
<dbReference type="UniPathway" id="UPA00288">
    <property type="reaction ID" value="UER01023"/>
</dbReference>
<dbReference type="GO" id="GO:0005829">
    <property type="term" value="C:cytosol"/>
    <property type="evidence" value="ECO:0007669"/>
    <property type="project" value="TreeGrafter"/>
</dbReference>
<dbReference type="GO" id="GO:0004372">
    <property type="term" value="F:glycine hydroxymethyltransferase activity"/>
    <property type="evidence" value="ECO:0007669"/>
    <property type="project" value="UniProtKB-UniRule"/>
</dbReference>
<dbReference type="GO" id="GO:0030170">
    <property type="term" value="F:pyridoxal phosphate binding"/>
    <property type="evidence" value="ECO:0007669"/>
    <property type="project" value="UniProtKB-UniRule"/>
</dbReference>
<dbReference type="GO" id="GO:0019264">
    <property type="term" value="P:glycine biosynthetic process from serine"/>
    <property type="evidence" value="ECO:0007669"/>
    <property type="project" value="UniProtKB-UniRule"/>
</dbReference>
<dbReference type="GO" id="GO:0035999">
    <property type="term" value="P:tetrahydrofolate interconversion"/>
    <property type="evidence" value="ECO:0007669"/>
    <property type="project" value="UniProtKB-UniRule"/>
</dbReference>
<dbReference type="CDD" id="cd00378">
    <property type="entry name" value="SHMT"/>
    <property type="match status" value="1"/>
</dbReference>
<dbReference type="FunFam" id="3.40.640.10:FF:000001">
    <property type="entry name" value="Serine hydroxymethyltransferase"/>
    <property type="match status" value="1"/>
</dbReference>
<dbReference type="FunFam" id="3.90.1150.10:FF:000003">
    <property type="entry name" value="Serine hydroxymethyltransferase"/>
    <property type="match status" value="1"/>
</dbReference>
<dbReference type="Gene3D" id="3.90.1150.10">
    <property type="entry name" value="Aspartate Aminotransferase, domain 1"/>
    <property type="match status" value="1"/>
</dbReference>
<dbReference type="Gene3D" id="3.40.640.10">
    <property type="entry name" value="Type I PLP-dependent aspartate aminotransferase-like (Major domain)"/>
    <property type="match status" value="1"/>
</dbReference>
<dbReference type="HAMAP" id="MF_00051">
    <property type="entry name" value="SHMT"/>
    <property type="match status" value="1"/>
</dbReference>
<dbReference type="InterPro" id="IPR015424">
    <property type="entry name" value="PyrdxlP-dep_Trfase"/>
</dbReference>
<dbReference type="InterPro" id="IPR015421">
    <property type="entry name" value="PyrdxlP-dep_Trfase_major"/>
</dbReference>
<dbReference type="InterPro" id="IPR015422">
    <property type="entry name" value="PyrdxlP-dep_Trfase_small"/>
</dbReference>
<dbReference type="InterPro" id="IPR001085">
    <property type="entry name" value="Ser_HO-MeTrfase"/>
</dbReference>
<dbReference type="InterPro" id="IPR049943">
    <property type="entry name" value="Ser_HO-MeTrfase-like"/>
</dbReference>
<dbReference type="InterPro" id="IPR019798">
    <property type="entry name" value="Ser_HO-MeTrfase_PLP_BS"/>
</dbReference>
<dbReference type="InterPro" id="IPR039429">
    <property type="entry name" value="SHMT-like_dom"/>
</dbReference>
<dbReference type="NCBIfam" id="NF000586">
    <property type="entry name" value="PRK00011.1"/>
    <property type="match status" value="1"/>
</dbReference>
<dbReference type="PANTHER" id="PTHR11680">
    <property type="entry name" value="SERINE HYDROXYMETHYLTRANSFERASE"/>
    <property type="match status" value="1"/>
</dbReference>
<dbReference type="PANTHER" id="PTHR11680:SF35">
    <property type="entry name" value="SERINE HYDROXYMETHYLTRANSFERASE 1"/>
    <property type="match status" value="1"/>
</dbReference>
<dbReference type="Pfam" id="PF00464">
    <property type="entry name" value="SHMT"/>
    <property type="match status" value="1"/>
</dbReference>
<dbReference type="PIRSF" id="PIRSF000412">
    <property type="entry name" value="SHMT"/>
    <property type="match status" value="1"/>
</dbReference>
<dbReference type="SUPFAM" id="SSF53383">
    <property type="entry name" value="PLP-dependent transferases"/>
    <property type="match status" value="1"/>
</dbReference>
<dbReference type="PROSITE" id="PS00096">
    <property type="entry name" value="SHMT"/>
    <property type="match status" value="1"/>
</dbReference>
<comment type="function">
    <text evidence="1">Catalyzes the reversible interconversion of serine and glycine with tetrahydrofolate (THF) serving as the one-carbon carrier. This reaction serves as the major source of one-carbon groups required for the biosynthesis of purines, thymidylate, methionine, and other important biomolecules. Also exhibits THF-independent aldolase activity toward beta-hydroxyamino acids, producing glycine and aldehydes, via a retro-aldol mechanism.</text>
</comment>
<comment type="catalytic activity">
    <reaction evidence="1">
        <text>(6R)-5,10-methylene-5,6,7,8-tetrahydrofolate + glycine + H2O = (6S)-5,6,7,8-tetrahydrofolate + L-serine</text>
        <dbReference type="Rhea" id="RHEA:15481"/>
        <dbReference type="ChEBI" id="CHEBI:15377"/>
        <dbReference type="ChEBI" id="CHEBI:15636"/>
        <dbReference type="ChEBI" id="CHEBI:33384"/>
        <dbReference type="ChEBI" id="CHEBI:57305"/>
        <dbReference type="ChEBI" id="CHEBI:57453"/>
        <dbReference type="EC" id="2.1.2.1"/>
    </reaction>
</comment>
<comment type="cofactor">
    <cofactor evidence="1">
        <name>pyridoxal 5'-phosphate</name>
        <dbReference type="ChEBI" id="CHEBI:597326"/>
    </cofactor>
</comment>
<comment type="pathway">
    <text evidence="1">One-carbon metabolism; tetrahydrofolate interconversion.</text>
</comment>
<comment type="pathway">
    <text evidence="1">Amino-acid biosynthesis; glycine biosynthesis; glycine from L-serine: step 1/1.</text>
</comment>
<comment type="subunit">
    <text evidence="1">Homodimer.</text>
</comment>
<comment type="subcellular location">
    <subcellularLocation>
        <location evidence="1">Cytoplasm</location>
    </subcellularLocation>
</comment>
<comment type="similarity">
    <text evidence="1">Belongs to the SHMT family.</text>
</comment>
<gene>
    <name evidence="1" type="primary">glyA1</name>
    <name type="ordered locus">RPA2724</name>
</gene>
<evidence type="ECO:0000255" key="1">
    <source>
        <dbReference type="HAMAP-Rule" id="MF_00051"/>
    </source>
</evidence>
<keyword id="KW-0028">Amino-acid biosynthesis</keyword>
<keyword id="KW-0963">Cytoplasm</keyword>
<keyword id="KW-0554">One-carbon metabolism</keyword>
<keyword id="KW-0663">Pyridoxal phosphate</keyword>
<keyword id="KW-0808">Transferase</keyword>